<proteinExistence type="evidence at transcript level"/>
<dbReference type="EMBL" id="L24192">
    <property type="protein sequence ID" value="AAA37881.1"/>
    <property type="molecule type" value="Genomic_DNA"/>
</dbReference>
<dbReference type="EMBL" id="L24191">
    <property type="protein sequence ID" value="AAA37882.1"/>
    <property type="molecule type" value="mRNA"/>
</dbReference>
<dbReference type="EMBL" id="AK078933">
    <property type="protein sequence ID" value="BAC37468.1"/>
    <property type="molecule type" value="mRNA"/>
</dbReference>
<dbReference type="EMBL" id="CH466534">
    <property type="protein sequence ID" value="EDL41439.1"/>
    <property type="molecule type" value="Genomic_DNA"/>
</dbReference>
<dbReference type="EMBL" id="BC118519">
    <property type="protein sequence ID" value="AAI18520.1"/>
    <property type="molecule type" value="mRNA"/>
</dbReference>
<dbReference type="CCDS" id="CCDS29609.1"/>
<dbReference type="PIR" id="A49684">
    <property type="entry name" value="A49684"/>
</dbReference>
<dbReference type="RefSeq" id="NP_032144.2">
    <property type="nucleotide sequence ID" value="NM_008118.3"/>
</dbReference>
<dbReference type="SMR" id="P52787"/>
<dbReference type="BioGRID" id="199918">
    <property type="interactions" value="1"/>
</dbReference>
<dbReference type="FunCoup" id="P52787">
    <property type="interactions" value="33"/>
</dbReference>
<dbReference type="STRING" id="10090.ENSMUSP00000025585"/>
<dbReference type="GlyCosmos" id="P52787">
    <property type="glycosylation" value="3 sites, No reported glycans"/>
</dbReference>
<dbReference type="GlyGen" id="P52787">
    <property type="glycosylation" value="3 sites"/>
</dbReference>
<dbReference type="PhosphoSitePlus" id="P52787"/>
<dbReference type="PaxDb" id="10090-ENSMUSP00000025585"/>
<dbReference type="ProteomicsDB" id="267216"/>
<dbReference type="Antibodypedia" id="27824">
    <property type="antibodies" value="307 antibodies from 26 providers"/>
</dbReference>
<dbReference type="DNASU" id="14603"/>
<dbReference type="Ensembl" id="ENSMUST00000025585.4">
    <property type="protein sequence ID" value="ENSMUSP00000025585.4"/>
    <property type="gene ID" value="ENSMUSG00000024682.4"/>
</dbReference>
<dbReference type="GeneID" id="14603"/>
<dbReference type="KEGG" id="mmu:14603"/>
<dbReference type="UCSC" id="uc008gsw.1">
    <property type="organism name" value="mouse"/>
</dbReference>
<dbReference type="AGR" id="MGI:1202394"/>
<dbReference type="CTD" id="2694"/>
<dbReference type="MGI" id="MGI:1202394">
    <property type="gene designation" value="Cblif"/>
</dbReference>
<dbReference type="VEuPathDB" id="HostDB:ENSMUSG00000024682"/>
<dbReference type="eggNOG" id="ENOG502RXIA">
    <property type="taxonomic scope" value="Eukaryota"/>
</dbReference>
<dbReference type="GeneTree" id="ENSGT00530000063370"/>
<dbReference type="HOGENOM" id="CLU_052188_2_0_1"/>
<dbReference type="InParanoid" id="P52787"/>
<dbReference type="OMA" id="AYNVEAQ"/>
<dbReference type="OrthoDB" id="6343110at2759"/>
<dbReference type="PhylomeDB" id="P52787"/>
<dbReference type="TreeFam" id="TF333092"/>
<dbReference type="Reactome" id="R-MMU-9758881">
    <property type="pathway name" value="Uptake of dietary cobalamins into enterocytes"/>
</dbReference>
<dbReference type="BioGRID-ORCS" id="14603">
    <property type="hits" value="1 hit in 75 CRISPR screens"/>
</dbReference>
<dbReference type="ChiTaRS" id="Mif">
    <property type="organism name" value="mouse"/>
</dbReference>
<dbReference type="PRO" id="PR:P52787"/>
<dbReference type="Proteomes" id="UP000000589">
    <property type="component" value="Chromosome 19"/>
</dbReference>
<dbReference type="RNAct" id="P52787">
    <property type="molecule type" value="protein"/>
</dbReference>
<dbReference type="Bgee" id="ENSMUSG00000024682">
    <property type="expression patterns" value="Expressed in epithelium of stomach and 26 other cell types or tissues"/>
</dbReference>
<dbReference type="GO" id="GO:0016324">
    <property type="term" value="C:apical plasma membrane"/>
    <property type="evidence" value="ECO:0007669"/>
    <property type="project" value="Ensembl"/>
</dbReference>
<dbReference type="GO" id="GO:0005768">
    <property type="term" value="C:endosome"/>
    <property type="evidence" value="ECO:0007669"/>
    <property type="project" value="Ensembl"/>
</dbReference>
<dbReference type="GO" id="GO:0005615">
    <property type="term" value="C:extracellular space"/>
    <property type="evidence" value="ECO:0000314"/>
    <property type="project" value="MGI"/>
</dbReference>
<dbReference type="GO" id="GO:0005902">
    <property type="term" value="C:microvillus"/>
    <property type="evidence" value="ECO:0007669"/>
    <property type="project" value="Ensembl"/>
</dbReference>
<dbReference type="GO" id="GO:0140355">
    <property type="term" value="F:cargo receptor ligand activity"/>
    <property type="evidence" value="ECO:0000314"/>
    <property type="project" value="MGI"/>
</dbReference>
<dbReference type="GO" id="GO:0031419">
    <property type="term" value="F:cobalamin binding"/>
    <property type="evidence" value="ECO:0000314"/>
    <property type="project" value="MGI"/>
</dbReference>
<dbReference type="GO" id="GO:0140104">
    <property type="term" value="F:molecular carrier activity"/>
    <property type="evidence" value="ECO:0000314"/>
    <property type="project" value="MGI"/>
</dbReference>
<dbReference type="GO" id="GO:0015889">
    <property type="term" value="P:cobalamin transport"/>
    <property type="evidence" value="ECO:0000315"/>
    <property type="project" value="MGI"/>
</dbReference>
<dbReference type="GO" id="GO:0006824">
    <property type="term" value="P:cobalt ion transport"/>
    <property type="evidence" value="ECO:0007669"/>
    <property type="project" value="UniProtKB-KW"/>
</dbReference>
<dbReference type="Gene3D" id="1.50.10.20">
    <property type="match status" value="1"/>
</dbReference>
<dbReference type="Gene3D" id="2.170.130.30">
    <property type="match status" value="1"/>
</dbReference>
<dbReference type="InterPro" id="IPR002157">
    <property type="entry name" value="Cbl-bd_prot"/>
</dbReference>
<dbReference type="InterPro" id="IPR051588">
    <property type="entry name" value="Cobalamin_Transport"/>
</dbReference>
<dbReference type="PANTHER" id="PTHR10559:SF15">
    <property type="entry name" value="COBALAMIN BINDING INTRINSIC FACTOR"/>
    <property type="match status" value="1"/>
</dbReference>
<dbReference type="PANTHER" id="PTHR10559">
    <property type="entry name" value="TRANSCOBALAMIN-1/GASTRIC INTRINSIC FACTOR"/>
    <property type="match status" value="1"/>
</dbReference>
<dbReference type="Pfam" id="PF01122">
    <property type="entry name" value="Cobalamin_bind"/>
    <property type="match status" value="1"/>
</dbReference>
<dbReference type="PROSITE" id="PS00468">
    <property type="entry name" value="COBALAMIN_BINDING"/>
    <property type="match status" value="1"/>
</dbReference>
<organism>
    <name type="scientific">Mus musculus</name>
    <name type="common">Mouse</name>
    <dbReference type="NCBI Taxonomy" id="10090"/>
    <lineage>
        <taxon>Eukaryota</taxon>
        <taxon>Metazoa</taxon>
        <taxon>Chordata</taxon>
        <taxon>Craniata</taxon>
        <taxon>Vertebrata</taxon>
        <taxon>Euteleostomi</taxon>
        <taxon>Mammalia</taxon>
        <taxon>Eutheria</taxon>
        <taxon>Euarchontoglires</taxon>
        <taxon>Glires</taxon>
        <taxon>Rodentia</taxon>
        <taxon>Myomorpha</taxon>
        <taxon>Muroidea</taxon>
        <taxon>Muridae</taxon>
        <taxon>Murinae</taxon>
        <taxon>Mus</taxon>
        <taxon>Mus</taxon>
    </lineage>
</organism>
<accession>P52787</accession>
<accession>Q8C5C1</accession>
<feature type="signal peptide" evidence="3">
    <location>
        <begin position="1"/>
        <end position="18"/>
    </location>
</feature>
<feature type="chain" id="PRO_0000005559" description="Cobalamin binding intrinsic factor">
    <location>
        <begin position="19"/>
        <end position="417"/>
    </location>
</feature>
<feature type="binding site" evidence="1">
    <location>
        <position position="171"/>
    </location>
    <ligand>
        <name>cob(II)alamin</name>
        <dbReference type="ChEBI" id="CHEBI:16304"/>
    </ligand>
</feature>
<feature type="binding site" evidence="1">
    <location>
        <position position="222"/>
    </location>
    <ligand>
        <name>cob(II)alamin</name>
        <dbReference type="ChEBI" id="CHEBI:16304"/>
    </ligand>
</feature>
<feature type="binding site" evidence="1">
    <location>
        <position position="270"/>
    </location>
    <ligand>
        <name>cob(II)alamin</name>
        <dbReference type="ChEBI" id="CHEBI:16304"/>
    </ligand>
</feature>
<feature type="binding site" evidence="1">
    <location>
        <begin position="365"/>
        <end position="370"/>
    </location>
    <ligand>
        <name>cob(II)alamin</name>
        <dbReference type="ChEBI" id="CHEBI:16304"/>
    </ligand>
</feature>
<feature type="binding site" evidence="1">
    <location>
        <begin position="386"/>
        <end position="395"/>
    </location>
    <ligand>
        <name>cob(II)alamin</name>
        <dbReference type="ChEBI" id="CHEBI:16304"/>
    </ligand>
</feature>
<feature type="modified residue" description="Phosphoserine" evidence="2">
    <location>
        <position position="191"/>
    </location>
</feature>
<feature type="glycosylation site" description="N-linked (GlcNAc...) asparagine" evidence="3">
    <location>
        <position position="311"/>
    </location>
</feature>
<feature type="glycosylation site" description="N-linked (GlcNAc...) asparagine" evidence="3">
    <location>
        <position position="330"/>
    </location>
</feature>
<feature type="glycosylation site" description="N-linked (GlcNAc...) asparagine" evidence="3">
    <location>
        <position position="413"/>
    </location>
</feature>
<feature type="disulfide bond" evidence="1">
    <location>
        <begin position="26"/>
        <end position="246"/>
    </location>
</feature>
<feature type="disulfide bond" evidence="1">
    <location>
        <begin position="103"/>
        <end position="288"/>
    </location>
</feature>
<feature type="disulfide bond" evidence="1">
    <location>
        <begin position="143"/>
        <end position="182"/>
    </location>
</feature>
<feature type="sequence conflict" description="In Ref. 1; AAA37881/AAA37882." evidence="4" ref="1">
    <original>D</original>
    <variation>N</variation>
    <location>
        <position position="86"/>
    </location>
</feature>
<feature type="sequence conflict" description="In Ref. 1; AAA37881/AAA37882." evidence="4" ref="1">
    <original>R</original>
    <variation>A</variation>
    <location>
        <position position="156"/>
    </location>
</feature>
<feature type="sequence conflict" description="In Ref. 1; AAA37881/AAA37882." evidence="4" ref="1">
    <original>L</original>
    <variation>P</variation>
    <location>
        <position position="327"/>
    </location>
</feature>
<name>IF_MOUSE</name>
<reference key="1">
    <citation type="journal article" date="1993" name="J. Biol. Chem.">
        <title>Use of transgenic mice to study regulation of gene expression in the parietal cell lineage of gastric units.</title>
        <authorList>
            <person name="Lorenz R.G."/>
            <person name="Gordon J.I."/>
        </authorList>
    </citation>
    <scope>NUCLEOTIDE SEQUENCE [GENOMIC DNA / MRNA]</scope>
    <source>
        <strain>BALB/cJ</strain>
        <tissue>Stomach</tissue>
    </source>
</reference>
<reference key="2">
    <citation type="journal article" date="2005" name="Science">
        <title>The transcriptional landscape of the mammalian genome.</title>
        <authorList>
            <person name="Carninci P."/>
            <person name="Kasukawa T."/>
            <person name="Katayama S."/>
            <person name="Gough J."/>
            <person name="Frith M.C."/>
            <person name="Maeda N."/>
            <person name="Oyama R."/>
            <person name="Ravasi T."/>
            <person name="Lenhard B."/>
            <person name="Wells C."/>
            <person name="Kodzius R."/>
            <person name="Shimokawa K."/>
            <person name="Bajic V.B."/>
            <person name="Brenner S.E."/>
            <person name="Batalov S."/>
            <person name="Forrest A.R."/>
            <person name="Zavolan M."/>
            <person name="Davis M.J."/>
            <person name="Wilming L.G."/>
            <person name="Aidinis V."/>
            <person name="Allen J.E."/>
            <person name="Ambesi-Impiombato A."/>
            <person name="Apweiler R."/>
            <person name="Aturaliya R.N."/>
            <person name="Bailey T.L."/>
            <person name="Bansal M."/>
            <person name="Baxter L."/>
            <person name="Beisel K.W."/>
            <person name="Bersano T."/>
            <person name="Bono H."/>
            <person name="Chalk A.M."/>
            <person name="Chiu K.P."/>
            <person name="Choudhary V."/>
            <person name="Christoffels A."/>
            <person name="Clutterbuck D.R."/>
            <person name="Crowe M.L."/>
            <person name="Dalla E."/>
            <person name="Dalrymple B.P."/>
            <person name="de Bono B."/>
            <person name="Della Gatta G."/>
            <person name="di Bernardo D."/>
            <person name="Down T."/>
            <person name="Engstrom P."/>
            <person name="Fagiolini M."/>
            <person name="Faulkner G."/>
            <person name="Fletcher C.F."/>
            <person name="Fukushima T."/>
            <person name="Furuno M."/>
            <person name="Futaki S."/>
            <person name="Gariboldi M."/>
            <person name="Georgii-Hemming P."/>
            <person name="Gingeras T.R."/>
            <person name="Gojobori T."/>
            <person name="Green R.E."/>
            <person name="Gustincich S."/>
            <person name="Harbers M."/>
            <person name="Hayashi Y."/>
            <person name="Hensch T.K."/>
            <person name="Hirokawa N."/>
            <person name="Hill D."/>
            <person name="Huminiecki L."/>
            <person name="Iacono M."/>
            <person name="Ikeo K."/>
            <person name="Iwama A."/>
            <person name="Ishikawa T."/>
            <person name="Jakt M."/>
            <person name="Kanapin A."/>
            <person name="Katoh M."/>
            <person name="Kawasawa Y."/>
            <person name="Kelso J."/>
            <person name="Kitamura H."/>
            <person name="Kitano H."/>
            <person name="Kollias G."/>
            <person name="Krishnan S.P."/>
            <person name="Kruger A."/>
            <person name="Kummerfeld S.K."/>
            <person name="Kurochkin I.V."/>
            <person name="Lareau L.F."/>
            <person name="Lazarevic D."/>
            <person name="Lipovich L."/>
            <person name="Liu J."/>
            <person name="Liuni S."/>
            <person name="McWilliam S."/>
            <person name="Madan Babu M."/>
            <person name="Madera M."/>
            <person name="Marchionni L."/>
            <person name="Matsuda H."/>
            <person name="Matsuzawa S."/>
            <person name="Miki H."/>
            <person name="Mignone F."/>
            <person name="Miyake S."/>
            <person name="Morris K."/>
            <person name="Mottagui-Tabar S."/>
            <person name="Mulder N."/>
            <person name="Nakano N."/>
            <person name="Nakauchi H."/>
            <person name="Ng P."/>
            <person name="Nilsson R."/>
            <person name="Nishiguchi S."/>
            <person name="Nishikawa S."/>
            <person name="Nori F."/>
            <person name="Ohara O."/>
            <person name="Okazaki Y."/>
            <person name="Orlando V."/>
            <person name="Pang K.C."/>
            <person name="Pavan W.J."/>
            <person name="Pavesi G."/>
            <person name="Pesole G."/>
            <person name="Petrovsky N."/>
            <person name="Piazza S."/>
            <person name="Reed J."/>
            <person name="Reid J.F."/>
            <person name="Ring B.Z."/>
            <person name="Ringwald M."/>
            <person name="Rost B."/>
            <person name="Ruan Y."/>
            <person name="Salzberg S.L."/>
            <person name="Sandelin A."/>
            <person name="Schneider C."/>
            <person name="Schoenbach C."/>
            <person name="Sekiguchi K."/>
            <person name="Semple C.A."/>
            <person name="Seno S."/>
            <person name="Sessa L."/>
            <person name="Sheng Y."/>
            <person name="Shibata Y."/>
            <person name="Shimada H."/>
            <person name="Shimada K."/>
            <person name="Silva D."/>
            <person name="Sinclair B."/>
            <person name="Sperling S."/>
            <person name="Stupka E."/>
            <person name="Sugiura K."/>
            <person name="Sultana R."/>
            <person name="Takenaka Y."/>
            <person name="Taki K."/>
            <person name="Tammoja K."/>
            <person name="Tan S.L."/>
            <person name="Tang S."/>
            <person name="Taylor M.S."/>
            <person name="Tegner J."/>
            <person name="Teichmann S.A."/>
            <person name="Ueda H.R."/>
            <person name="van Nimwegen E."/>
            <person name="Verardo R."/>
            <person name="Wei C.L."/>
            <person name="Yagi K."/>
            <person name="Yamanishi H."/>
            <person name="Zabarovsky E."/>
            <person name="Zhu S."/>
            <person name="Zimmer A."/>
            <person name="Hide W."/>
            <person name="Bult C."/>
            <person name="Grimmond S.M."/>
            <person name="Teasdale R.D."/>
            <person name="Liu E.T."/>
            <person name="Brusic V."/>
            <person name="Quackenbush J."/>
            <person name="Wahlestedt C."/>
            <person name="Mattick J.S."/>
            <person name="Hume D.A."/>
            <person name="Kai C."/>
            <person name="Sasaki D."/>
            <person name="Tomaru Y."/>
            <person name="Fukuda S."/>
            <person name="Kanamori-Katayama M."/>
            <person name="Suzuki M."/>
            <person name="Aoki J."/>
            <person name="Arakawa T."/>
            <person name="Iida J."/>
            <person name="Imamura K."/>
            <person name="Itoh M."/>
            <person name="Kato T."/>
            <person name="Kawaji H."/>
            <person name="Kawagashira N."/>
            <person name="Kawashima T."/>
            <person name="Kojima M."/>
            <person name="Kondo S."/>
            <person name="Konno H."/>
            <person name="Nakano K."/>
            <person name="Ninomiya N."/>
            <person name="Nishio T."/>
            <person name="Okada M."/>
            <person name="Plessy C."/>
            <person name="Shibata K."/>
            <person name="Shiraki T."/>
            <person name="Suzuki S."/>
            <person name="Tagami M."/>
            <person name="Waki K."/>
            <person name="Watahiki A."/>
            <person name="Okamura-Oho Y."/>
            <person name="Suzuki H."/>
            <person name="Kawai J."/>
            <person name="Hayashizaki Y."/>
        </authorList>
    </citation>
    <scope>NUCLEOTIDE SEQUENCE [LARGE SCALE MRNA]</scope>
    <source>
        <strain>C57BL/6J</strain>
        <tissue>Cecum</tissue>
    </source>
</reference>
<reference key="3">
    <citation type="submission" date="2005-07" db="EMBL/GenBank/DDBJ databases">
        <authorList>
            <person name="Mural R.J."/>
            <person name="Adams M.D."/>
            <person name="Myers E.W."/>
            <person name="Smith H.O."/>
            <person name="Venter J.C."/>
        </authorList>
    </citation>
    <scope>NUCLEOTIDE SEQUENCE [LARGE SCALE GENOMIC DNA]</scope>
</reference>
<reference key="4">
    <citation type="journal article" date="2004" name="Genome Res.">
        <title>The status, quality, and expansion of the NIH full-length cDNA project: the Mammalian Gene Collection (MGC).</title>
        <authorList>
            <consortium name="The MGC Project Team"/>
        </authorList>
    </citation>
    <scope>NUCLEOTIDE SEQUENCE [LARGE SCALE MRNA]</scope>
</reference>
<keyword id="KW-0170">Cobalt</keyword>
<keyword id="KW-0171">Cobalt transport</keyword>
<keyword id="KW-1015">Disulfide bond</keyword>
<keyword id="KW-0325">Glycoprotein</keyword>
<keyword id="KW-0406">Ion transport</keyword>
<keyword id="KW-0597">Phosphoprotein</keyword>
<keyword id="KW-1185">Reference proteome</keyword>
<keyword id="KW-0964">Secreted</keyword>
<keyword id="KW-0732">Signal</keyword>
<keyword id="KW-0813">Transport</keyword>
<comment type="function">
    <text evidence="1">Promotes absorption of the essential vitamin cobalamin (Cbl) in the ileum. After interaction with CUBN, the CBLIF-cobalamin complex is internalized via receptor-mediated endocytosis (By similarity).</text>
</comment>
<comment type="subunit">
    <text evidence="1">Interacts with CUBN (via CUB domains).</text>
</comment>
<comment type="subcellular location">
    <subcellularLocation>
        <location>Secreted</location>
    </subcellularLocation>
</comment>
<comment type="tissue specificity">
    <text>Gastric mucosa.</text>
</comment>
<comment type="similarity">
    <text evidence="4">Belongs to the eukaryotic cobalamin transport proteins family.</text>
</comment>
<sequence length="417" mass="45497">MAWLTLYLLSVLWAVAGTSTRAQSSCSVPPDQQPWVDGLQALMENSVTDSDFPNPSILIAMNLAGAYNVEAQKLLTYQLMASDSADLTSGQLALTVMALTSSCRDPGSKVSTLLKKMENWSPSSPGAESSAFYGPGLAILALCQKSSEATLPIAVRFAKTLMMEPSPFNVDTGAVATLALTCMYNKIPVGSQENYRDLFGQALKAIVEKISLRIKADGIIGDIYSTGLAMQALSVTPEQPTKKWDCEKTMHTILNEIKQGKFQNPMSIAQILPSLKGKTYLDVPQVTCGPDHEVPPTLTDYPTPVPTSVSNITVIYTINNQLRGVDLLFNVTIEVSVKSGSVLLAVLEEAQRKNSMFKFETTMTSWGLIVSSINNIAENVNHKTYWEFLSGKTPLDEGVAYYIPFNHEHITANFTQY</sequence>
<gene>
    <name type="primary">Cblif</name>
    <name evidence="5" type="synonym">Gif</name>
</gene>
<evidence type="ECO:0000250" key="1"/>
<evidence type="ECO:0000250" key="2">
    <source>
        <dbReference type="UniProtKB" id="P17267"/>
    </source>
</evidence>
<evidence type="ECO:0000255" key="3"/>
<evidence type="ECO:0000305" key="4"/>
<evidence type="ECO:0000312" key="5">
    <source>
        <dbReference type="MGI" id="MGI:1202394"/>
    </source>
</evidence>
<protein>
    <recommendedName>
        <fullName evidence="4">Cobalamin binding intrinsic factor</fullName>
    </recommendedName>
    <alternativeName>
        <fullName evidence="4">Gastric intrinsic factor</fullName>
    </alternativeName>
    <alternativeName>
        <fullName>Intrinsic factor</fullName>
        <shortName>IF</shortName>
        <shortName>INF</shortName>
    </alternativeName>
</protein>